<keyword id="KW-0067">ATP-binding</keyword>
<keyword id="KW-0414">Isoprene biosynthesis</keyword>
<keyword id="KW-0418">Kinase</keyword>
<keyword id="KW-0547">Nucleotide-binding</keyword>
<keyword id="KW-1185">Reference proteome</keyword>
<keyword id="KW-0808">Transferase</keyword>
<dbReference type="EC" id="2.7.1.148" evidence="1"/>
<dbReference type="EMBL" id="AE017340">
    <property type="protein sequence ID" value="AAV81768.1"/>
    <property type="molecule type" value="Genomic_DNA"/>
</dbReference>
<dbReference type="RefSeq" id="WP_011234179.1">
    <property type="nucleotide sequence ID" value="NC_006512.1"/>
</dbReference>
<dbReference type="SMR" id="Q5QV06"/>
<dbReference type="STRING" id="283942.IL0928"/>
<dbReference type="GeneID" id="41336083"/>
<dbReference type="KEGG" id="ilo:IL0928"/>
<dbReference type="eggNOG" id="COG1947">
    <property type="taxonomic scope" value="Bacteria"/>
</dbReference>
<dbReference type="HOGENOM" id="CLU_053057_3_0_6"/>
<dbReference type="OrthoDB" id="9809438at2"/>
<dbReference type="UniPathway" id="UPA00056">
    <property type="reaction ID" value="UER00094"/>
</dbReference>
<dbReference type="Proteomes" id="UP000001171">
    <property type="component" value="Chromosome"/>
</dbReference>
<dbReference type="GO" id="GO:0050515">
    <property type="term" value="F:4-(cytidine 5'-diphospho)-2-C-methyl-D-erythritol kinase activity"/>
    <property type="evidence" value="ECO:0007669"/>
    <property type="project" value="UniProtKB-UniRule"/>
</dbReference>
<dbReference type="GO" id="GO:0005524">
    <property type="term" value="F:ATP binding"/>
    <property type="evidence" value="ECO:0007669"/>
    <property type="project" value="UniProtKB-UniRule"/>
</dbReference>
<dbReference type="GO" id="GO:0019288">
    <property type="term" value="P:isopentenyl diphosphate biosynthetic process, methylerythritol 4-phosphate pathway"/>
    <property type="evidence" value="ECO:0007669"/>
    <property type="project" value="UniProtKB-UniRule"/>
</dbReference>
<dbReference type="GO" id="GO:0016114">
    <property type="term" value="P:terpenoid biosynthetic process"/>
    <property type="evidence" value="ECO:0007669"/>
    <property type="project" value="InterPro"/>
</dbReference>
<dbReference type="Gene3D" id="3.30.230.10">
    <property type="match status" value="1"/>
</dbReference>
<dbReference type="Gene3D" id="3.30.70.890">
    <property type="entry name" value="GHMP kinase, C-terminal domain"/>
    <property type="match status" value="1"/>
</dbReference>
<dbReference type="HAMAP" id="MF_00061">
    <property type="entry name" value="IspE"/>
    <property type="match status" value="1"/>
</dbReference>
<dbReference type="InterPro" id="IPR013750">
    <property type="entry name" value="GHMP_kinase_C_dom"/>
</dbReference>
<dbReference type="InterPro" id="IPR036554">
    <property type="entry name" value="GHMP_kinase_C_sf"/>
</dbReference>
<dbReference type="InterPro" id="IPR006204">
    <property type="entry name" value="GHMP_kinase_N_dom"/>
</dbReference>
<dbReference type="InterPro" id="IPR004424">
    <property type="entry name" value="IspE"/>
</dbReference>
<dbReference type="InterPro" id="IPR020568">
    <property type="entry name" value="Ribosomal_Su5_D2-typ_SF"/>
</dbReference>
<dbReference type="InterPro" id="IPR014721">
    <property type="entry name" value="Ribsml_uS5_D2-typ_fold_subgr"/>
</dbReference>
<dbReference type="NCBIfam" id="TIGR00154">
    <property type="entry name" value="ispE"/>
    <property type="match status" value="1"/>
</dbReference>
<dbReference type="PANTHER" id="PTHR43527">
    <property type="entry name" value="4-DIPHOSPHOCYTIDYL-2-C-METHYL-D-ERYTHRITOL KINASE, CHLOROPLASTIC"/>
    <property type="match status" value="1"/>
</dbReference>
<dbReference type="PANTHER" id="PTHR43527:SF2">
    <property type="entry name" value="4-DIPHOSPHOCYTIDYL-2-C-METHYL-D-ERYTHRITOL KINASE, CHLOROPLASTIC"/>
    <property type="match status" value="1"/>
</dbReference>
<dbReference type="Pfam" id="PF08544">
    <property type="entry name" value="GHMP_kinases_C"/>
    <property type="match status" value="1"/>
</dbReference>
<dbReference type="Pfam" id="PF00288">
    <property type="entry name" value="GHMP_kinases_N"/>
    <property type="match status" value="1"/>
</dbReference>
<dbReference type="PIRSF" id="PIRSF010376">
    <property type="entry name" value="IspE"/>
    <property type="match status" value="1"/>
</dbReference>
<dbReference type="SUPFAM" id="SSF55060">
    <property type="entry name" value="GHMP Kinase, C-terminal domain"/>
    <property type="match status" value="1"/>
</dbReference>
<dbReference type="SUPFAM" id="SSF54211">
    <property type="entry name" value="Ribosomal protein S5 domain 2-like"/>
    <property type="match status" value="1"/>
</dbReference>
<name>ISPE_IDILO</name>
<organism>
    <name type="scientific">Idiomarina loihiensis (strain ATCC BAA-735 / DSM 15497 / L2-TR)</name>
    <dbReference type="NCBI Taxonomy" id="283942"/>
    <lineage>
        <taxon>Bacteria</taxon>
        <taxon>Pseudomonadati</taxon>
        <taxon>Pseudomonadota</taxon>
        <taxon>Gammaproteobacteria</taxon>
        <taxon>Alteromonadales</taxon>
        <taxon>Idiomarinaceae</taxon>
        <taxon>Idiomarina</taxon>
    </lineage>
</organism>
<feature type="chain" id="PRO_0000235099" description="4-diphosphocytidyl-2-C-methyl-D-erythritol kinase">
    <location>
        <begin position="1"/>
        <end position="286"/>
    </location>
</feature>
<feature type="active site" evidence="1">
    <location>
        <position position="13"/>
    </location>
</feature>
<feature type="active site" evidence="1">
    <location>
        <position position="143"/>
    </location>
</feature>
<feature type="binding site" evidence="1">
    <location>
        <begin position="101"/>
        <end position="111"/>
    </location>
    <ligand>
        <name>ATP</name>
        <dbReference type="ChEBI" id="CHEBI:30616"/>
    </ligand>
</feature>
<gene>
    <name evidence="1" type="primary">ispE</name>
    <name type="ordered locus">IL0928</name>
</gene>
<sequence length="286" mass="31435">MAVNILTLPAPAKLNLFLHIIGRRSDGYHNLQTVFQFLDYADTLKFYTAADDKFDLIDHDSHIPRDENLVWKALTALRKTYEEKGITQLPGCSIELIKRLPQGAGLGGGSSNAATALVGLNQLWGSHLNSTELQAIGRKLGADVPVFIHGHACFAEGIGDVFTNITPPTPWYLVVKPNVSISTAALFSHPKLERNCSPVTADNWQQQKVANVFEPVVCDLHTEVAMLRRALLEYAPTRLTGSGACLFSTFETRQAAKEAQQQVPKELCSFIAQGQNRSPLIQTLTQ</sequence>
<comment type="function">
    <text evidence="1">Catalyzes the phosphorylation of the position 2 hydroxy group of 4-diphosphocytidyl-2C-methyl-D-erythritol.</text>
</comment>
<comment type="catalytic activity">
    <reaction evidence="1">
        <text>4-CDP-2-C-methyl-D-erythritol + ATP = 4-CDP-2-C-methyl-D-erythritol 2-phosphate + ADP + H(+)</text>
        <dbReference type="Rhea" id="RHEA:18437"/>
        <dbReference type="ChEBI" id="CHEBI:15378"/>
        <dbReference type="ChEBI" id="CHEBI:30616"/>
        <dbReference type="ChEBI" id="CHEBI:57823"/>
        <dbReference type="ChEBI" id="CHEBI:57919"/>
        <dbReference type="ChEBI" id="CHEBI:456216"/>
        <dbReference type="EC" id="2.7.1.148"/>
    </reaction>
</comment>
<comment type="pathway">
    <text evidence="1">Isoprenoid biosynthesis; isopentenyl diphosphate biosynthesis via DXP pathway; isopentenyl diphosphate from 1-deoxy-D-xylulose 5-phosphate: step 3/6.</text>
</comment>
<comment type="similarity">
    <text evidence="1">Belongs to the GHMP kinase family. IspE subfamily.</text>
</comment>
<protein>
    <recommendedName>
        <fullName evidence="1">4-diphosphocytidyl-2-C-methyl-D-erythritol kinase</fullName>
        <shortName evidence="1">CMK</shortName>
        <ecNumber evidence="1">2.7.1.148</ecNumber>
    </recommendedName>
    <alternativeName>
        <fullName evidence="1">4-(cytidine-5'-diphospho)-2-C-methyl-D-erythritol kinase</fullName>
    </alternativeName>
</protein>
<evidence type="ECO:0000255" key="1">
    <source>
        <dbReference type="HAMAP-Rule" id="MF_00061"/>
    </source>
</evidence>
<reference key="1">
    <citation type="journal article" date="2004" name="Proc. Natl. Acad. Sci. U.S.A.">
        <title>Genome sequence of the deep-sea gamma-proteobacterium Idiomarina loihiensis reveals amino acid fermentation as a source of carbon and energy.</title>
        <authorList>
            <person name="Hou S."/>
            <person name="Saw J.H."/>
            <person name="Lee K.S."/>
            <person name="Freitas T.A."/>
            <person name="Belisle C."/>
            <person name="Kawarabayasi Y."/>
            <person name="Donachie S.P."/>
            <person name="Pikina A."/>
            <person name="Galperin M.Y."/>
            <person name="Koonin E.V."/>
            <person name="Makarova K.S."/>
            <person name="Omelchenko M.V."/>
            <person name="Sorokin A."/>
            <person name="Wolf Y.I."/>
            <person name="Li Q.X."/>
            <person name="Keum Y.S."/>
            <person name="Campbell S."/>
            <person name="Denery J."/>
            <person name="Aizawa S."/>
            <person name="Shibata S."/>
            <person name="Malahoff A."/>
            <person name="Alam M."/>
        </authorList>
    </citation>
    <scope>NUCLEOTIDE SEQUENCE [LARGE SCALE GENOMIC DNA]</scope>
    <source>
        <strain>ATCC BAA-735 / DSM 15497 / L2-TR</strain>
    </source>
</reference>
<proteinExistence type="inferred from homology"/>
<accession>Q5QV06</accession>